<keyword id="KW-0998">Cell outer membrane</keyword>
<keyword id="KW-0406">Ion transport</keyword>
<keyword id="KW-0472">Membrane</keyword>
<keyword id="KW-0626">Porin</keyword>
<keyword id="KW-0732">Signal</keyword>
<keyword id="KW-0812">Transmembrane</keyword>
<keyword id="KW-1134">Transmembrane beta strand</keyword>
<keyword id="KW-0813">Transport</keyword>
<comment type="function">
    <text>Major outer membrane protein associated with peptidoglycans. May function as a porin.</text>
</comment>
<comment type="subunit">
    <text>Oligomeric.</text>
</comment>
<comment type="subcellular location">
    <subcellularLocation>
        <location>Cell outer membrane</location>
    </subcellularLocation>
</comment>
<comment type="similarity">
    <text evidence="2">Belongs to the Omp25/RopB family.</text>
</comment>
<feature type="signal peptide" evidence="1">
    <location>
        <begin position="1"/>
        <end position="19"/>
    </location>
</feature>
<feature type="chain" id="PRO_0000021885" description="31 kDa outer-membrane immunogenic protein">
    <location>
        <begin position="20"/>
        <end position="240"/>
    </location>
</feature>
<feature type="region of interest" description="Epitope recognized by the monoclonal antibody A59/10F09/G10">
    <location>
        <begin position="48"/>
        <end position="83"/>
    </location>
</feature>
<dbReference type="EMBL" id="AE014292">
    <property type="protein sequence ID" value="AAN33618.1"/>
    <property type="molecule type" value="Genomic_DNA"/>
</dbReference>
<dbReference type="EMBL" id="CP002998">
    <property type="protein sequence ID" value="AEM19897.1"/>
    <property type="molecule type" value="Genomic_DNA"/>
</dbReference>
<dbReference type="RefSeq" id="WP_004681766.1">
    <property type="nucleotide sequence ID" value="NZ_KN046805.1"/>
</dbReference>
<dbReference type="GeneID" id="97535431"/>
<dbReference type="KEGG" id="bms:BRA0423"/>
<dbReference type="KEGG" id="bsi:BS1330_II0420"/>
<dbReference type="PATRIC" id="fig|204722.22.peg.3209"/>
<dbReference type="HOGENOM" id="CLU_037100_0_1_5"/>
<dbReference type="Proteomes" id="UP000007104">
    <property type="component" value="Chromosome II"/>
</dbReference>
<dbReference type="GO" id="GO:0009279">
    <property type="term" value="C:cell outer membrane"/>
    <property type="evidence" value="ECO:0007669"/>
    <property type="project" value="UniProtKB-SubCell"/>
</dbReference>
<dbReference type="GO" id="GO:0046930">
    <property type="term" value="C:pore complex"/>
    <property type="evidence" value="ECO:0007669"/>
    <property type="project" value="UniProtKB-KW"/>
</dbReference>
<dbReference type="GO" id="GO:0015288">
    <property type="term" value="F:porin activity"/>
    <property type="evidence" value="ECO:0007669"/>
    <property type="project" value="UniProtKB-KW"/>
</dbReference>
<dbReference type="GO" id="GO:0006811">
    <property type="term" value="P:monoatomic ion transport"/>
    <property type="evidence" value="ECO:0007669"/>
    <property type="project" value="UniProtKB-KW"/>
</dbReference>
<dbReference type="Gene3D" id="2.40.160.20">
    <property type="match status" value="1"/>
</dbReference>
<dbReference type="InterPro" id="IPR051692">
    <property type="entry name" value="OMP-like"/>
</dbReference>
<dbReference type="InterPro" id="IPR011250">
    <property type="entry name" value="OMP/PagP_b-brl"/>
</dbReference>
<dbReference type="InterPro" id="IPR027385">
    <property type="entry name" value="OMP_b-brl"/>
</dbReference>
<dbReference type="PANTHER" id="PTHR34001">
    <property type="entry name" value="BLL7405 PROTEIN"/>
    <property type="match status" value="1"/>
</dbReference>
<dbReference type="PANTHER" id="PTHR34001:SF3">
    <property type="entry name" value="BLL7405 PROTEIN"/>
    <property type="match status" value="1"/>
</dbReference>
<dbReference type="Pfam" id="PF13505">
    <property type="entry name" value="OMP_b-brl"/>
    <property type="match status" value="1"/>
</dbReference>
<dbReference type="SUPFAM" id="SSF56925">
    <property type="entry name" value="OMPA-like"/>
    <property type="match status" value="1"/>
</dbReference>
<proteinExistence type="inferred from homology"/>
<name>OM31_BRUSU</name>
<protein>
    <recommendedName>
        <fullName>31 kDa outer-membrane immunogenic protein</fullName>
    </recommendedName>
</protein>
<accession>P0A3U5</accession>
<accession>G0KCF9</accession>
<accession>Q45322</accession>
<reference key="1">
    <citation type="journal article" date="2002" name="Proc. Natl. Acad. Sci. U.S.A.">
        <title>The Brucella suis genome reveals fundamental similarities between animal and plant pathogens and symbionts.</title>
        <authorList>
            <person name="Paulsen I.T."/>
            <person name="Seshadri R."/>
            <person name="Nelson K.E."/>
            <person name="Eisen J.A."/>
            <person name="Heidelberg J.F."/>
            <person name="Read T.D."/>
            <person name="Dodson R.J."/>
            <person name="Umayam L.A."/>
            <person name="Brinkac L.M."/>
            <person name="Beanan M.J."/>
            <person name="Daugherty S.C."/>
            <person name="DeBoy R.T."/>
            <person name="Durkin A.S."/>
            <person name="Kolonay J.F."/>
            <person name="Madupu R."/>
            <person name="Nelson W.C."/>
            <person name="Ayodeji B."/>
            <person name="Kraul M."/>
            <person name="Shetty J."/>
            <person name="Malek J.A."/>
            <person name="Van Aken S.E."/>
            <person name="Riedmuller S."/>
            <person name="Tettelin H."/>
            <person name="Gill S.R."/>
            <person name="White O."/>
            <person name="Salzberg S.L."/>
            <person name="Hoover D.L."/>
            <person name="Lindler L.E."/>
            <person name="Halling S.M."/>
            <person name="Boyle S.M."/>
            <person name="Fraser C.M."/>
        </authorList>
    </citation>
    <scope>NUCLEOTIDE SEQUENCE [LARGE SCALE GENOMIC DNA]</scope>
    <source>
        <strain>1330</strain>
    </source>
</reference>
<reference key="2">
    <citation type="journal article" date="2011" name="J. Bacteriol.">
        <title>Revised genome sequence of Brucella suis 1330.</title>
        <authorList>
            <person name="Tae H."/>
            <person name="Shallom S."/>
            <person name="Settlage R."/>
            <person name="Preston D."/>
            <person name="Adams L.G."/>
            <person name="Garner H.R."/>
        </authorList>
    </citation>
    <scope>NUCLEOTIDE SEQUENCE [LARGE SCALE GENOMIC DNA]</scope>
    <source>
        <strain>1330</strain>
    </source>
</reference>
<gene>
    <name type="primary">omp31</name>
    <name type="synonym">omp31-2</name>
    <name type="ordered locus">BRA0423</name>
    <name type="ordered locus">BS1330_II0420</name>
</gene>
<organism>
    <name type="scientific">Brucella suis biovar 1 (strain 1330)</name>
    <dbReference type="NCBI Taxonomy" id="204722"/>
    <lineage>
        <taxon>Bacteria</taxon>
        <taxon>Pseudomonadati</taxon>
        <taxon>Pseudomonadota</taxon>
        <taxon>Alphaproteobacteria</taxon>
        <taxon>Hyphomicrobiales</taxon>
        <taxon>Brucellaceae</taxon>
        <taxon>Brucella/Ochrobactrum group</taxon>
        <taxon>Brucella</taxon>
    </lineage>
</organism>
<sequence>MKSVILASIAAMFATSAMAADVVVSEPSAPTAAPVDTFSWTGGYIGINAGYAGGKFKHPFSSFDKEDNEQVSGSLDVTAGGFVGGVQAGYNWQLDNGVVLGAETDFQGSSVTGSISAGASGLEGKAETKVEWFGTVRARLGYTATERLMVYGTGGLAYGKVKSAFNLGDDASALHTWSDKTKAGWTLGAGAEYAINNNWTLKSEYLYTDLGKRNLVDVDNSFLESKVNFHTVRVGLNYKF</sequence>
<evidence type="ECO:0000255" key="1"/>
<evidence type="ECO:0000305" key="2"/>